<name>MACA2_HUMAN</name>
<sequence length="520" mass="60525">MAGCTRKLTHLRKRIHRPRRRTTRRWKRWFKFRKRKGEKRPRPNHKAVARRAKLKFSTSEKLHWPEQELAKKSILNAEDSLIIDNKRSISHLSSGVLKDIFTTGTSSYNVLLQSKEEKKYHSQKQSSSTYSKRCRKPSKSPNTSRSKDPRRMKALVPVTSSGTWYCLERRPAVFVTSSVSSPVKFTHDISVTGNGIVLPPKPKSKVKWCHFSTLPKPKPQLSRSFEKGDDFSGKKFCILTAIKPTNLEKEKLRFFKSDYTYNPQFEYANPALPSVLAKHSHASDRFLKQIVVHLTEDLLSRASMTVVNGCPTLTINVSTAREHWLEGMLRHEIGTHYFRGINNLQQPWNSWTGRKKHELKPNNPTEEGLASIHSVLFRKDPFLWRAALLYYTVYQASQMSFCELFKDIGRFVKDPNTRWDYCVRAKRGWTDTSQPGCFSKDQVYLDGILQILRYRDTIDFHLLTALGKVSYEDVDRLKGLAVTENMRVPHFLQDHGRYMEHLEKIMEVNELTDRELKDLI</sequence>
<accession>Q8NCT3</accession>
<accession>B4DF35</accession>
<accession>B7ZLT4</accession>
<accession>B9EGB9</accession>
<accession>O94969</accession>
<accession>Q0VGC1</accession>
<accession>Q7Z4L2</accession>
<proteinExistence type="evidence at protein level"/>
<feature type="chain" id="PRO_0000320617" description="Putative tyrosine carboxypeptidase MATCAP2">
    <location>
        <begin position="1"/>
        <end position="520"/>
    </location>
</feature>
<feature type="region of interest" description="Disordered" evidence="2">
    <location>
        <begin position="116"/>
        <end position="153"/>
    </location>
</feature>
<feature type="active site" description="Nucleophile" evidence="1">
    <location>
        <position position="332"/>
    </location>
</feature>
<feature type="binding site" evidence="1">
    <location>
        <position position="331"/>
    </location>
    <ligand>
        <name>Zn(2+)</name>
        <dbReference type="ChEBI" id="CHEBI:29105"/>
        <note>catalytic</note>
    </ligand>
</feature>
<feature type="binding site" evidence="1">
    <location>
        <position position="336"/>
    </location>
    <ligand>
        <name>Zn(2+)</name>
        <dbReference type="ChEBI" id="CHEBI:29105"/>
        <note>catalytic</note>
    </ligand>
</feature>
<feature type="binding site" evidence="1">
    <location>
        <position position="367"/>
    </location>
    <ligand>
        <name>Zn(2+)</name>
        <dbReference type="ChEBI" id="CHEBI:29105"/>
        <note>catalytic</note>
    </ligand>
</feature>
<feature type="splice variant" id="VSP_043322" description="In isoform 5." evidence="4">
    <location>
        <begin position="1"/>
        <end position="151"/>
    </location>
</feature>
<feature type="splice variant" id="VSP_031685" description="In isoform 2 and isoform 4." evidence="5">
    <original>MAGCTRKLTHLRKRIHRPRRRTTRRWKRWFKFRKRKGEKRPRPNHKAVARRAKLKFSTSE</original>
    <variation>MVATGWARRSGLHPAPRPLRGAQEALAKNLWREERNRPLILSSLIIK</variation>
    <location>
        <begin position="1"/>
        <end position="60"/>
    </location>
</feature>
<feature type="splice variant" id="VSP_031686" description="In isoform 3 and isoform 6." evidence="3 5">
    <original>MAGCTRKLTHLRKRIHRPRRRTTRRWKRWFKFRKRKGEKRPRPNHKAVARRAKLKFSTS</original>
    <variation>MLESIRVT</variation>
    <location>
        <begin position="1"/>
        <end position="59"/>
    </location>
</feature>
<feature type="splice variant" id="VSP_043323" description="In isoform 5 and isoform 6." evidence="4 5">
    <original>Q</original>
    <variation>QSINIMELTLQKYGSYEKFEQATGGSLLSKTRIWSHVRKYMMKEGCLGE</variation>
    <location>
        <position position="289"/>
    </location>
</feature>
<feature type="splice variant" id="VSP_031687" description="In isoform 4." evidence="5">
    <original>IVVHLTEDLLSRASMTVVNGCPTLTINVSTAREHWLEGMLRHEIGTHYFRGINNLQQPWNSWTGRKKHELKPNNPTEEGLASIHSVLFRKDPFLWRAALLYYTVYQASQMSFCELFKDIGRFVKDPNTRWDYCVRAKRGWTDTSQPGCFSKDQVYLDGILQILRYRDTIDFHLLTALGKVSYEDVDRLKGLAVTENMRVPHFLQDHGRYMEHLEKIMEVNELTDRELKDLI</original>
    <variation>VKCHFNSGSSFLCTKTIICDLISKNKDI</variation>
    <location>
        <begin position="290"/>
        <end position="520"/>
    </location>
</feature>
<feature type="sequence conflict" description="In Ref. 1; BAA74918." evidence="6" ref="1">
    <original>E</original>
    <variation>K</variation>
    <location>
        <position position="117"/>
    </location>
</feature>
<feature type="sequence conflict" description="In Ref. 4; AAH28678." evidence="6" ref="4">
    <original>HA</original>
    <variation>P</variation>
    <location>
        <begin position="281"/>
        <end position="282"/>
    </location>
</feature>
<dbReference type="EC" id="3.4.17.-" evidence="1"/>
<dbReference type="EMBL" id="AB020702">
    <property type="protein sequence ID" value="BAA74918.1"/>
    <property type="status" value="ALT_INIT"/>
    <property type="molecule type" value="mRNA"/>
</dbReference>
<dbReference type="EMBL" id="AK293912">
    <property type="protein sequence ID" value="BAG57296.1"/>
    <property type="molecule type" value="mRNA"/>
</dbReference>
<dbReference type="EMBL" id="AC006960">
    <property type="status" value="NOT_ANNOTATED_CDS"/>
    <property type="molecule type" value="Genomic_DNA"/>
</dbReference>
<dbReference type="EMBL" id="BC028678">
    <property type="protein sequence ID" value="AAH28678.3"/>
    <property type="molecule type" value="mRNA"/>
</dbReference>
<dbReference type="EMBL" id="BC056191">
    <property type="protein sequence ID" value="AAH56191.2"/>
    <property type="molecule type" value="mRNA"/>
</dbReference>
<dbReference type="EMBL" id="BC110422">
    <property type="protein sequence ID" value="AAI10423.1"/>
    <property type="molecule type" value="mRNA"/>
</dbReference>
<dbReference type="EMBL" id="BC136362">
    <property type="protein sequence ID" value="AAI36363.1"/>
    <property type="molecule type" value="mRNA"/>
</dbReference>
<dbReference type="EMBL" id="BC144032">
    <property type="protein sequence ID" value="AAI44033.1"/>
    <property type="molecule type" value="mRNA"/>
</dbReference>
<dbReference type="CCDS" id="CCDS43570.1">
    <molecule id="Q8NCT3-1"/>
</dbReference>
<dbReference type="CCDS" id="CCDS47573.1">
    <molecule id="Q8NCT3-3"/>
</dbReference>
<dbReference type="CCDS" id="CCDS56482.1">
    <molecule id="Q8NCT3-5"/>
</dbReference>
<dbReference type="CCDS" id="CCDS56483.1">
    <molecule id="Q8NCT3-2"/>
</dbReference>
<dbReference type="CCDS" id="CCDS56484.1">
    <molecule id="Q8NCT3-6"/>
</dbReference>
<dbReference type="RefSeq" id="NP_001093895.1">
    <molecule id="Q8NCT3-1"/>
    <property type="nucleotide sequence ID" value="NM_001100425.2"/>
</dbReference>
<dbReference type="RefSeq" id="NP_001186635.1">
    <molecule id="Q8NCT3-6"/>
    <property type="nucleotide sequence ID" value="NM_001199706.2"/>
</dbReference>
<dbReference type="RefSeq" id="NP_001186636.1">
    <molecule id="Q8NCT3-2"/>
    <property type="nucleotide sequence ID" value="NM_001199707.2"/>
</dbReference>
<dbReference type="RefSeq" id="NP_001186637.1">
    <molecule id="Q8NCT3-5"/>
    <property type="nucleotide sequence ID" value="NM_001199708.2"/>
</dbReference>
<dbReference type="RefSeq" id="NP_056129.2">
    <molecule id="Q8NCT3-3"/>
    <property type="nucleotide sequence ID" value="NM_015314.3"/>
</dbReference>
<dbReference type="RefSeq" id="XP_024302469.1">
    <molecule id="Q8NCT3-5"/>
    <property type="nucleotide sequence ID" value="XM_024446701.2"/>
</dbReference>
<dbReference type="RefSeq" id="XP_054213677.1">
    <molecule id="Q8NCT3-5"/>
    <property type="nucleotide sequence ID" value="XM_054357702.1"/>
</dbReference>
<dbReference type="SMR" id="Q8NCT3"/>
<dbReference type="BioGRID" id="116946">
    <property type="interactions" value="13"/>
</dbReference>
<dbReference type="FunCoup" id="Q8NCT3">
    <property type="interactions" value="270"/>
</dbReference>
<dbReference type="IntAct" id="Q8NCT3">
    <property type="interactions" value="11"/>
</dbReference>
<dbReference type="STRING" id="9606.ENSP00000297063"/>
<dbReference type="GlyGen" id="Q8NCT3">
    <property type="glycosylation" value="1 site, 1 O-linked glycan (1 site)"/>
</dbReference>
<dbReference type="iPTMnet" id="Q8NCT3"/>
<dbReference type="PhosphoSitePlus" id="Q8NCT3"/>
<dbReference type="BioMuta" id="KIAA0895"/>
<dbReference type="DMDM" id="172045806"/>
<dbReference type="jPOST" id="Q8NCT3"/>
<dbReference type="MassIVE" id="Q8NCT3"/>
<dbReference type="PaxDb" id="9606-ENSP00000297063"/>
<dbReference type="PeptideAtlas" id="Q8NCT3"/>
<dbReference type="ProteomicsDB" id="72940">
    <molecule id="Q8NCT3-1"/>
</dbReference>
<dbReference type="ProteomicsDB" id="72941">
    <molecule id="Q8NCT3-2"/>
</dbReference>
<dbReference type="ProteomicsDB" id="72942">
    <molecule id="Q8NCT3-3"/>
</dbReference>
<dbReference type="ProteomicsDB" id="72943">
    <molecule id="Q8NCT3-4"/>
</dbReference>
<dbReference type="ProteomicsDB" id="72944">
    <molecule id="Q8NCT3-5"/>
</dbReference>
<dbReference type="ProteomicsDB" id="72945">
    <molecule id="Q8NCT3-6"/>
</dbReference>
<dbReference type="Antibodypedia" id="66049">
    <property type="antibodies" value="23 antibodies from 10 providers"/>
</dbReference>
<dbReference type="DNASU" id="23366"/>
<dbReference type="Ensembl" id="ENST00000297063.10">
    <molecule id="Q8NCT3-1"/>
    <property type="protein sequence ID" value="ENSP00000297063.6"/>
    <property type="gene ID" value="ENSG00000164542.13"/>
</dbReference>
<dbReference type="Ensembl" id="ENST00000317020.10">
    <molecule id="Q8NCT3-3"/>
    <property type="protein sequence ID" value="ENSP00000319251.6"/>
    <property type="gene ID" value="ENSG00000164542.13"/>
</dbReference>
<dbReference type="Ensembl" id="ENST00000338533.9">
    <molecule id="Q8NCT3-2"/>
    <property type="protein sequence ID" value="ENSP00000344805.5"/>
    <property type="gene ID" value="ENSG00000164542.13"/>
</dbReference>
<dbReference type="Ensembl" id="ENST00000415803.2">
    <molecule id="Q8NCT3-4"/>
    <property type="protein sequence ID" value="ENSP00000400749.2"/>
    <property type="gene ID" value="ENSG00000164542.13"/>
</dbReference>
<dbReference type="Ensembl" id="ENST00000436884.5">
    <molecule id="Q8NCT3-5"/>
    <property type="protein sequence ID" value="ENSP00000389985.1"/>
    <property type="gene ID" value="ENSG00000164542.13"/>
</dbReference>
<dbReference type="Ensembl" id="ENST00000440378.6">
    <molecule id="Q8NCT3-6"/>
    <property type="protein sequence ID" value="ENSP00000390837.1"/>
    <property type="gene ID" value="ENSG00000164542.13"/>
</dbReference>
<dbReference type="GeneID" id="23366"/>
<dbReference type="KEGG" id="hsa:23366"/>
<dbReference type="MANE-Select" id="ENST00000440378.6">
    <molecule id="Q8NCT3-6"/>
    <property type="protein sequence ID" value="ENSP00000390837.1"/>
    <property type="RefSeq nucleotide sequence ID" value="NM_001199706.2"/>
    <property type="RefSeq protein sequence ID" value="NP_001186635.1"/>
</dbReference>
<dbReference type="UCSC" id="uc003tfb.3">
    <molecule id="Q8NCT3-1"/>
    <property type="organism name" value="human"/>
</dbReference>
<dbReference type="AGR" id="HGNC:22206"/>
<dbReference type="CTD" id="23366"/>
<dbReference type="GeneCards" id="MATCAP2"/>
<dbReference type="HGNC" id="HGNC:22206">
    <property type="gene designation" value="MATCAP2"/>
</dbReference>
<dbReference type="HPA" id="ENSG00000164542">
    <property type="expression patterns" value="Tissue enhanced (testis)"/>
</dbReference>
<dbReference type="MIM" id="619896">
    <property type="type" value="gene"/>
</dbReference>
<dbReference type="neXtProt" id="NX_Q8NCT3"/>
<dbReference type="OpenTargets" id="ENSG00000164542"/>
<dbReference type="PharmGKB" id="PA164721801"/>
<dbReference type="VEuPathDB" id="HostDB:ENSG00000164542"/>
<dbReference type="eggNOG" id="ENOG502QQGI">
    <property type="taxonomic scope" value="Eukaryota"/>
</dbReference>
<dbReference type="GeneTree" id="ENSGT00390000004417"/>
<dbReference type="HOGENOM" id="CLU_038689_1_0_1"/>
<dbReference type="InParanoid" id="Q8NCT3"/>
<dbReference type="OMA" id="CNHEIGT"/>
<dbReference type="OrthoDB" id="449345at2759"/>
<dbReference type="PAN-GO" id="Q8NCT3">
    <property type="GO annotations" value="0 GO annotations based on evolutionary models"/>
</dbReference>
<dbReference type="PhylomeDB" id="Q8NCT3"/>
<dbReference type="TreeFam" id="TF329621"/>
<dbReference type="PathwayCommons" id="Q8NCT3"/>
<dbReference type="SignaLink" id="Q8NCT3"/>
<dbReference type="BioGRID-ORCS" id="23366">
    <property type="hits" value="13 hits in 1155 CRISPR screens"/>
</dbReference>
<dbReference type="ChiTaRS" id="KIAA0895">
    <property type="organism name" value="human"/>
</dbReference>
<dbReference type="GeneWiki" id="KIAA0895"/>
<dbReference type="GenomeRNAi" id="23366"/>
<dbReference type="Pharos" id="Q8NCT3">
    <property type="development level" value="Tdark"/>
</dbReference>
<dbReference type="PRO" id="PR:Q8NCT3"/>
<dbReference type="Proteomes" id="UP000005640">
    <property type="component" value="Chromosome 7"/>
</dbReference>
<dbReference type="RNAct" id="Q8NCT3">
    <property type="molecule type" value="protein"/>
</dbReference>
<dbReference type="Bgee" id="ENSG00000164542">
    <property type="expression patterns" value="Expressed in choroid plexus epithelium and 174 other cell types or tissues"/>
</dbReference>
<dbReference type="ExpressionAtlas" id="Q8NCT3">
    <property type="expression patterns" value="baseline and differential"/>
</dbReference>
<dbReference type="GO" id="GO:0004180">
    <property type="term" value="F:carboxypeptidase activity"/>
    <property type="evidence" value="ECO:0007669"/>
    <property type="project" value="UniProtKB-KW"/>
</dbReference>
<dbReference type="GO" id="GO:0046872">
    <property type="term" value="F:metal ion binding"/>
    <property type="evidence" value="ECO:0007669"/>
    <property type="project" value="UniProtKB-KW"/>
</dbReference>
<dbReference type="GO" id="GO:0008237">
    <property type="term" value="F:metallopeptidase activity"/>
    <property type="evidence" value="ECO:0007669"/>
    <property type="project" value="UniProtKB-KW"/>
</dbReference>
<dbReference type="GO" id="GO:0006508">
    <property type="term" value="P:proteolysis"/>
    <property type="evidence" value="ECO:0007669"/>
    <property type="project" value="UniProtKB-KW"/>
</dbReference>
<dbReference type="InterPro" id="IPR012548">
    <property type="entry name" value="MATCAP"/>
</dbReference>
<dbReference type="PANTHER" id="PTHR31817">
    <property type="match status" value="1"/>
</dbReference>
<dbReference type="PANTHER" id="PTHR31817:SF3">
    <property type="entry name" value="TYROSINE CARBOXYPEPTIDASE MATCAP2-RELATED"/>
    <property type="match status" value="1"/>
</dbReference>
<dbReference type="Pfam" id="PF08014">
    <property type="entry name" value="MATCAP"/>
    <property type="match status" value="1"/>
</dbReference>
<dbReference type="SMART" id="SM01154">
    <property type="entry name" value="DUF1704"/>
    <property type="match status" value="1"/>
</dbReference>
<gene>
    <name evidence="8" type="primary">MATCAP2</name>
    <name evidence="7" type="synonym">KIAA0895</name>
</gene>
<protein>
    <recommendedName>
        <fullName evidence="1">Putative tyrosine carboxypeptidase MATCAP2</fullName>
        <ecNumber evidence="1">3.4.17.-</ecNumber>
    </recommendedName>
</protein>
<comment type="function">
    <text evidence="1">Putative tyrosine carboxypeptidase.</text>
</comment>
<comment type="cofactor">
    <cofactor evidence="1">
        <name>Zn(2+)</name>
        <dbReference type="ChEBI" id="CHEBI:29105"/>
    </cofactor>
    <text evidence="1">Binds 1 zinc ion per subunit.</text>
</comment>
<comment type="alternative products">
    <event type="alternative splicing"/>
    <isoform>
        <id>Q8NCT3-1</id>
        <name>1</name>
        <sequence type="displayed"/>
    </isoform>
    <isoform>
        <id>Q8NCT3-2</id>
        <name>2</name>
        <sequence type="described" ref="VSP_031685"/>
    </isoform>
    <isoform>
        <id>Q8NCT3-3</id>
        <name>3</name>
        <sequence type="described" ref="VSP_031686"/>
    </isoform>
    <isoform>
        <id>Q8NCT3-4</id>
        <name>4</name>
        <sequence type="described" ref="VSP_031685 VSP_031687"/>
    </isoform>
    <isoform>
        <id>Q8NCT3-5</id>
        <name>5</name>
        <sequence type="described" ref="VSP_043322 VSP_043323"/>
    </isoform>
    <isoform>
        <id>Q8NCT3-6</id>
        <name>6</name>
        <sequence type="described" ref="VSP_031686 VSP_043323"/>
    </isoform>
</comment>
<comment type="domain">
    <text evidence="1">Putative metalloprotease with an atypical HExxxH zinc-binding motif instead of HExxH, which interrupts the active site-containing helix without affecting the integrity of the catalytic site arrangement.</text>
</comment>
<comment type="sequence caution" evidence="6">
    <conflict type="erroneous initiation">
        <sequence resource="EMBL-CDS" id="BAA74918"/>
    </conflict>
</comment>
<evidence type="ECO:0000250" key="1">
    <source>
        <dbReference type="UniProtKB" id="Q68EN5"/>
    </source>
</evidence>
<evidence type="ECO:0000256" key="2">
    <source>
        <dbReference type="SAM" id="MobiDB-lite"/>
    </source>
</evidence>
<evidence type="ECO:0000303" key="3">
    <source>
    </source>
</evidence>
<evidence type="ECO:0000303" key="4">
    <source>
    </source>
</evidence>
<evidence type="ECO:0000303" key="5">
    <source>
    </source>
</evidence>
<evidence type="ECO:0000305" key="6"/>
<evidence type="ECO:0000312" key="7">
    <source>
        <dbReference type="EMBL" id="BAA74918.1"/>
    </source>
</evidence>
<evidence type="ECO:0000312" key="8">
    <source>
        <dbReference type="HGNC" id="HGNC:22206"/>
    </source>
</evidence>
<reference key="1">
    <citation type="journal article" date="1998" name="DNA Res.">
        <title>Prediction of the coding sequences of unidentified human genes. XII. The complete sequences of 100 new cDNA clones from brain which code for large proteins in vitro.</title>
        <authorList>
            <person name="Nagase T."/>
            <person name="Ishikawa K."/>
            <person name="Suyama M."/>
            <person name="Kikuno R."/>
            <person name="Hirosawa M."/>
            <person name="Miyajima N."/>
            <person name="Tanaka A."/>
            <person name="Kotani H."/>
            <person name="Nomura N."/>
            <person name="Ohara O."/>
        </authorList>
    </citation>
    <scope>NUCLEOTIDE SEQUENCE [LARGE SCALE MRNA] (ISOFORM 3)</scope>
    <source>
        <tissue>Brain</tissue>
    </source>
</reference>
<reference key="2">
    <citation type="journal article" date="2004" name="Nat. Genet.">
        <title>Complete sequencing and characterization of 21,243 full-length human cDNAs.</title>
        <authorList>
            <person name="Ota T."/>
            <person name="Suzuki Y."/>
            <person name="Nishikawa T."/>
            <person name="Otsuki T."/>
            <person name="Sugiyama T."/>
            <person name="Irie R."/>
            <person name="Wakamatsu A."/>
            <person name="Hayashi K."/>
            <person name="Sato H."/>
            <person name="Nagai K."/>
            <person name="Kimura K."/>
            <person name="Makita H."/>
            <person name="Sekine M."/>
            <person name="Obayashi M."/>
            <person name="Nishi T."/>
            <person name="Shibahara T."/>
            <person name="Tanaka T."/>
            <person name="Ishii S."/>
            <person name="Yamamoto J."/>
            <person name="Saito K."/>
            <person name="Kawai Y."/>
            <person name="Isono Y."/>
            <person name="Nakamura Y."/>
            <person name="Nagahari K."/>
            <person name="Murakami K."/>
            <person name="Yasuda T."/>
            <person name="Iwayanagi T."/>
            <person name="Wagatsuma M."/>
            <person name="Shiratori A."/>
            <person name="Sudo H."/>
            <person name="Hosoiri T."/>
            <person name="Kaku Y."/>
            <person name="Kodaira H."/>
            <person name="Kondo H."/>
            <person name="Sugawara M."/>
            <person name="Takahashi M."/>
            <person name="Kanda K."/>
            <person name="Yokoi T."/>
            <person name="Furuya T."/>
            <person name="Kikkawa E."/>
            <person name="Omura Y."/>
            <person name="Abe K."/>
            <person name="Kamihara K."/>
            <person name="Katsuta N."/>
            <person name="Sato K."/>
            <person name="Tanikawa M."/>
            <person name="Yamazaki M."/>
            <person name="Ninomiya K."/>
            <person name="Ishibashi T."/>
            <person name="Yamashita H."/>
            <person name="Murakawa K."/>
            <person name="Fujimori K."/>
            <person name="Tanai H."/>
            <person name="Kimata M."/>
            <person name="Watanabe M."/>
            <person name="Hiraoka S."/>
            <person name="Chiba Y."/>
            <person name="Ishida S."/>
            <person name="Ono Y."/>
            <person name="Takiguchi S."/>
            <person name="Watanabe S."/>
            <person name="Yosida M."/>
            <person name="Hotuta T."/>
            <person name="Kusano J."/>
            <person name="Kanehori K."/>
            <person name="Takahashi-Fujii A."/>
            <person name="Hara H."/>
            <person name="Tanase T.-O."/>
            <person name="Nomura Y."/>
            <person name="Togiya S."/>
            <person name="Komai F."/>
            <person name="Hara R."/>
            <person name="Takeuchi K."/>
            <person name="Arita M."/>
            <person name="Imose N."/>
            <person name="Musashino K."/>
            <person name="Yuuki H."/>
            <person name="Oshima A."/>
            <person name="Sasaki N."/>
            <person name="Aotsuka S."/>
            <person name="Yoshikawa Y."/>
            <person name="Matsunawa H."/>
            <person name="Ichihara T."/>
            <person name="Shiohata N."/>
            <person name="Sano S."/>
            <person name="Moriya S."/>
            <person name="Momiyama H."/>
            <person name="Satoh N."/>
            <person name="Takami S."/>
            <person name="Terashima Y."/>
            <person name="Suzuki O."/>
            <person name="Nakagawa S."/>
            <person name="Senoh A."/>
            <person name="Mizoguchi H."/>
            <person name="Goto Y."/>
            <person name="Shimizu F."/>
            <person name="Wakebe H."/>
            <person name="Hishigaki H."/>
            <person name="Watanabe T."/>
            <person name="Sugiyama A."/>
            <person name="Takemoto M."/>
            <person name="Kawakami B."/>
            <person name="Yamazaki M."/>
            <person name="Watanabe K."/>
            <person name="Kumagai A."/>
            <person name="Itakura S."/>
            <person name="Fukuzumi Y."/>
            <person name="Fujimori Y."/>
            <person name="Komiyama M."/>
            <person name="Tashiro H."/>
            <person name="Tanigami A."/>
            <person name="Fujiwara T."/>
            <person name="Ono T."/>
            <person name="Yamada K."/>
            <person name="Fujii Y."/>
            <person name="Ozaki K."/>
            <person name="Hirao M."/>
            <person name="Ohmori Y."/>
            <person name="Kawabata A."/>
            <person name="Hikiji T."/>
            <person name="Kobatake N."/>
            <person name="Inagaki H."/>
            <person name="Ikema Y."/>
            <person name="Okamoto S."/>
            <person name="Okitani R."/>
            <person name="Kawakami T."/>
            <person name="Noguchi S."/>
            <person name="Itoh T."/>
            <person name="Shigeta K."/>
            <person name="Senba T."/>
            <person name="Matsumura K."/>
            <person name="Nakajima Y."/>
            <person name="Mizuno T."/>
            <person name="Morinaga M."/>
            <person name="Sasaki M."/>
            <person name="Togashi T."/>
            <person name="Oyama M."/>
            <person name="Hata H."/>
            <person name="Watanabe M."/>
            <person name="Komatsu T."/>
            <person name="Mizushima-Sugano J."/>
            <person name="Satoh T."/>
            <person name="Shirai Y."/>
            <person name="Takahashi Y."/>
            <person name="Nakagawa K."/>
            <person name="Okumura K."/>
            <person name="Nagase T."/>
            <person name="Nomura N."/>
            <person name="Kikuchi H."/>
            <person name="Masuho Y."/>
            <person name="Yamashita R."/>
            <person name="Nakai K."/>
            <person name="Yada T."/>
            <person name="Nakamura Y."/>
            <person name="Ohara O."/>
            <person name="Isogai T."/>
            <person name="Sugano S."/>
        </authorList>
    </citation>
    <scope>NUCLEOTIDE SEQUENCE [LARGE SCALE MRNA] (ISOFORM 5)</scope>
    <source>
        <tissue>Cerebellum</tissue>
    </source>
</reference>
<reference key="3">
    <citation type="journal article" date="2003" name="Nature">
        <title>The DNA sequence of human chromosome 7.</title>
        <authorList>
            <person name="Hillier L.W."/>
            <person name="Fulton R.S."/>
            <person name="Fulton L.A."/>
            <person name="Graves T.A."/>
            <person name="Pepin K.H."/>
            <person name="Wagner-McPherson C."/>
            <person name="Layman D."/>
            <person name="Maas J."/>
            <person name="Jaeger S."/>
            <person name="Walker R."/>
            <person name="Wylie K."/>
            <person name="Sekhon M."/>
            <person name="Becker M.C."/>
            <person name="O'Laughlin M.D."/>
            <person name="Schaller M.E."/>
            <person name="Fewell G.A."/>
            <person name="Delehaunty K.D."/>
            <person name="Miner T.L."/>
            <person name="Nash W.E."/>
            <person name="Cordes M."/>
            <person name="Du H."/>
            <person name="Sun H."/>
            <person name="Edwards J."/>
            <person name="Bradshaw-Cordum H."/>
            <person name="Ali J."/>
            <person name="Andrews S."/>
            <person name="Isak A."/>
            <person name="Vanbrunt A."/>
            <person name="Nguyen C."/>
            <person name="Du F."/>
            <person name="Lamar B."/>
            <person name="Courtney L."/>
            <person name="Kalicki J."/>
            <person name="Ozersky P."/>
            <person name="Bielicki L."/>
            <person name="Scott K."/>
            <person name="Holmes A."/>
            <person name="Harkins R."/>
            <person name="Harris A."/>
            <person name="Strong C.M."/>
            <person name="Hou S."/>
            <person name="Tomlinson C."/>
            <person name="Dauphin-Kohlberg S."/>
            <person name="Kozlowicz-Reilly A."/>
            <person name="Leonard S."/>
            <person name="Rohlfing T."/>
            <person name="Rock S.M."/>
            <person name="Tin-Wollam A.-M."/>
            <person name="Abbott A."/>
            <person name="Minx P."/>
            <person name="Maupin R."/>
            <person name="Strowmatt C."/>
            <person name="Latreille P."/>
            <person name="Miller N."/>
            <person name="Johnson D."/>
            <person name="Murray J."/>
            <person name="Woessner J.P."/>
            <person name="Wendl M.C."/>
            <person name="Yang S.-P."/>
            <person name="Schultz B.R."/>
            <person name="Wallis J.W."/>
            <person name="Spieth J."/>
            <person name="Bieri T.A."/>
            <person name="Nelson J.O."/>
            <person name="Berkowicz N."/>
            <person name="Wohldmann P.E."/>
            <person name="Cook L.L."/>
            <person name="Hickenbotham M.T."/>
            <person name="Eldred J."/>
            <person name="Williams D."/>
            <person name="Bedell J.A."/>
            <person name="Mardis E.R."/>
            <person name="Clifton S.W."/>
            <person name="Chissoe S.L."/>
            <person name="Marra M.A."/>
            <person name="Raymond C."/>
            <person name="Haugen E."/>
            <person name="Gillett W."/>
            <person name="Zhou Y."/>
            <person name="James R."/>
            <person name="Phelps K."/>
            <person name="Iadanoto S."/>
            <person name="Bubb K."/>
            <person name="Simms E."/>
            <person name="Levy R."/>
            <person name="Clendenning J."/>
            <person name="Kaul R."/>
            <person name="Kent W.J."/>
            <person name="Furey T.S."/>
            <person name="Baertsch R.A."/>
            <person name="Brent M.R."/>
            <person name="Keibler E."/>
            <person name="Flicek P."/>
            <person name="Bork P."/>
            <person name="Suyama M."/>
            <person name="Bailey J.A."/>
            <person name="Portnoy M.E."/>
            <person name="Torrents D."/>
            <person name="Chinwalla A.T."/>
            <person name="Gish W.R."/>
            <person name="Eddy S.R."/>
            <person name="McPherson J.D."/>
            <person name="Olson M.V."/>
            <person name="Eichler E.E."/>
            <person name="Green E.D."/>
            <person name="Waterston R.H."/>
            <person name="Wilson R.K."/>
        </authorList>
    </citation>
    <scope>NUCLEOTIDE SEQUENCE [LARGE SCALE GENOMIC DNA]</scope>
</reference>
<reference key="4">
    <citation type="journal article" date="2004" name="Genome Res.">
        <title>The status, quality, and expansion of the NIH full-length cDNA project: the Mammalian Gene Collection (MGC).</title>
        <authorList>
            <consortium name="The MGC Project Team"/>
        </authorList>
    </citation>
    <scope>NUCLEOTIDE SEQUENCE [LARGE SCALE MRNA] (ISOFORMS 1; 2; 3; 4 AND 6)</scope>
    <source>
        <tissue>Testis</tissue>
    </source>
</reference>
<organism>
    <name type="scientific">Homo sapiens</name>
    <name type="common">Human</name>
    <dbReference type="NCBI Taxonomy" id="9606"/>
    <lineage>
        <taxon>Eukaryota</taxon>
        <taxon>Metazoa</taxon>
        <taxon>Chordata</taxon>
        <taxon>Craniata</taxon>
        <taxon>Vertebrata</taxon>
        <taxon>Euteleostomi</taxon>
        <taxon>Mammalia</taxon>
        <taxon>Eutheria</taxon>
        <taxon>Euarchontoglires</taxon>
        <taxon>Primates</taxon>
        <taxon>Haplorrhini</taxon>
        <taxon>Catarrhini</taxon>
        <taxon>Hominidae</taxon>
        <taxon>Homo</taxon>
    </lineage>
</organism>
<keyword id="KW-0025">Alternative splicing</keyword>
<keyword id="KW-0121">Carboxypeptidase</keyword>
<keyword id="KW-0378">Hydrolase</keyword>
<keyword id="KW-0479">Metal-binding</keyword>
<keyword id="KW-0482">Metalloprotease</keyword>
<keyword id="KW-0645">Protease</keyword>
<keyword id="KW-1267">Proteomics identification</keyword>
<keyword id="KW-1185">Reference proteome</keyword>
<keyword id="KW-0862">Zinc</keyword>